<evidence type="ECO:0000255" key="1"/>
<evidence type="ECO:0000305" key="2"/>
<gene>
    <name type="ordered locus">PM1437</name>
</gene>
<proteinExistence type="predicted"/>
<dbReference type="EMBL" id="AE004439">
    <property type="protein sequence ID" value="AAK03521.1"/>
    <property type="molecule type" value="Genomic_DNA"/>
</dbReference>
<dbReference type="RefSeq" id="WP_005754995.1">
    <property type="nucleotide sequence ID" value="NC_002663.1"/>
</dbReference>
<dbReference type="STRING" id="272843.PM1437"/>
<dbReference type="EnsemblBacteria" id="AAK03521">
    <property type="protein sequence ID" value="AAK03521"/>
    <property type="gene ID" value="PM1437"/>
</dbReference>
<dbReference type="KEGG" id="pmu:PM1437"/>
<dbReference type="PATRIC" id="fig|272843.6.peg.1451"/>
<dbReference type="HOGENOM" id="CLU_176917_0_0_6"/>
<dbReference type="OrthoDB" id="5690765at2"/>
<dbReference type="Proteomes" id="UP000000809">
    <property type="component" value="Chromosome"/>
</dbReference>
<dbReference type="GO" id="GO:0005886">
    <property type="term" value="C:plasma membrane"/>
    <property type="evidence" value="ECO:0007669"/>
    <property type="project" value="UniProtKB-SubCell"/>
</dbReference>
<dbReference type="InterPro" id="IPR035333">
    <property type="entry name" value="DUF5389"/>
</dbReference>
<dbReference type="Pfam" id="PF17364">
    <property type="entry name" value="DUF5389"/>
    <property type="match status" value="1"/>
</dbReference>
<name>Y1437_PASMU</name>
<reference key="1">
    <citation type="journal article" date="2001" name="Proc. Natl. Acad. Sci. U.S.A.">
        <title>Complete genomic sequence of Pasteurella multocida Pm70.</title>
        <authorList>
            <person name="May B.J."/>
            <person name="Zhang Q."/>
            <person name="Li L.L."/>
            <person name="Paustian M.L."/>
            <person name="Whittam T.S."/>
            <person name="Kapur V."/>
        </authorList>
    </citation>
    <scope>NUCLEOTIDE SEQUENCE [LARGE SCALE GENOMIC DNA]</scope>
    <source>
        <strain>Pm70</strain>
    </source>
</reference>
<organism>
    <name type="scientific">Pasteurella multocida (strain Pm70)</name>
    <dbReference type="NCBI Taxonomy" id="272843"/>
    <lineage>
        <taxon>Bacteria</taxon>
        <taxon>Pseudomonadati</taxon>
        <taxon>Pseudomonadota</taxon>
        <taxon>Gammaproteobacteria</taxon>
        <taxon>Pasteurellales</taxon>
        <taxon>Pasteurellaceae</taxon>
        <taxon>Pasteurella</taxon>
    </lineage>
</organism>
<sequence>MERENKPKGFSGFSWGIALFCLPILLWPLALTISPNLLKNPRLSETETTLMSVFLWAYPFGLALIARLAYRLNQHKPPFARGLLGLSAVAFYGMLFYVAGGFH</sequence>
<protein>
    <recommendedName>
        <fullName>Uncharacterized protein PM1437</fullName>
    </recommendedName>
</protein>
<feature type="chain" id="PRO_0000216324" description="Uncharacterized protein PM1437">
    <location>
        <begin position="1"/>
        <end position="103"/>
    </location>
</feature>
<feature type="transmembrane region" description="Helical" evidence="1">
    <location>
        <begin position="12"/>
        <end position="34"/>
    </location>
</feature>
<feature type="transmembrane region" description="Helical" evidence="1">
    <location>
        <begin position="49"/>
        <end position="66"/>
    </location>
</feature>
<feature type="transmembrane region" description="Helical" evidence="1">
    <location>
        <begin position="79"/>
        <end position="101"/>
    </location>
</feature>
<comment type="subcellular location">
    <subcellularLocation>
        <location evidence="2">Cell membrane</location>
        <topology evidence="2">Multi-pass membrane protein</topology>
    </subcellularLocation>
</comment>
<keyword id="KW-1003">Cell membrane</keyword>
<keyword id="KW-0472">Membrane</keyword>
<keyword id="KW-1185">Reference proteome</keyword>
<keyword id="KW-0812">Transmembrane</keyword>
<keyword id="KW-1133">Transmembrane helix</keyword>
<accession>Q9CL11</accession>